<accession>Q2K9J8</accession>
<reference key="1">
    <citation type="journal article" date="2006" name="Proc. Natl. Acad. Sci. U.S.A.">
        <title>The partitioned Rhizobium etli genome: genetic and metabolic redundancy in seven interacting replicons.</title>
        <authorList>
            <person name="Gonzalez V."/>
            <person name="Santamaria R.I."/>
            <person name="Bustos P."/>
            <person name="Hernandez-Gonzalez I."/>
            <person name="Medrano-Soto A."/>
            <person name="Moreno-Hagelsieb G."/>
            <person name="Janga S.C."/>
            <person name="Ramirez M.A."/>
            <person name="Jimenez-Jacinto V."/>
            <person name="Collado-Vides J."/>
            <person name="Davila G."/>
        </authorList>
    </citation>
    <scope>NUCLEOTIDE SEQUENCE [LARGE SCALE GENOMIC DNA]</scope>
    <source>
        <strain>ATCC 51251 / DSM 11541 / JCM 21823 / NBRC 15573 / CFN 42</strain>
    </source>
</reference>
<name>RL30_RHIEC</name>
<feature type="chain" id="PRO_0000347134" description="Large ribosomal subunit protein uL30">
    <location>
        <begin position="1"/>
        <end position="69"/>
    </location>
</feature>
<dbReference type="EMBL" id="CP000133">
    <property type="protein sequence ID" value="ABC90488.1"/>
    <property type="molecule type" value="Genomic_DNA"/>
</dbReference>
<dbReference type="RefSeq" id="WP_011424988.1">
    <property type="nucleotide sequence ID" value="NC_007761.1"/>
</dbReference>
<dbReference type="SMR" id="Q2K9J8"/>
<dbReference type="GeneID" id="66145874"/>
<dbReference type="KEGG" id="ret:RHE_CH01693"/>
<dbReference type="eggNOG" id="COG1841">
    <property type="taxonomic scope" value="Bacteria"/>
</dbReference>
<dbReference type="HOGENOM" id="CLU_131047_1_2_5"/>
<dbReference type="OrthoDB" id="9812790at2"/>
<dbReference type="Proteomes" id="UP000001936">
    <property type="component" value="Chromosome"/>
</dbReference>
<dbReference type="GO" id="GO:0022625">
    <property type="term" value="C:cytosolic large ribosomal subunit"/>
    <property type="evidence" value="ECO:0007669"/>
    <property type="project" value="TreeGrafter"/>
</dbReference>
<dbReference type="GO" id="GO:0003735">
    <property type="term" value="F:structural constituent of ribosome"/>
    <property type="evidence" value="ECO:0007669"/>
    <property type="project" value="InterPro"/>
</dbReference>
<dbReference type="GO" id="GO:0006412">
    <property type="term" value="P:translation"/>
    <property type="evidence" value="ECO:0007669"/>
    <property type="project" value="UniProtKB-UniRule"/>
</dbReference>
<dbReference type="CDD" id="cd01658">
    <property type="entry name" value="Ribosomal_L30"/>
    <property type="match status" value="1"/>
</dbReference>
<dbReference type="Gene3D" id="3.30.1390.20">
    <property type="entry name" value="Ribosomal protein L30, ferredoxin-like fold domain"/>
    <property type="match status" value="1"/>
</dbReference>
<dbReference type="HAMAP" id="MF_01371_B">
    <property type="entry name" value="Ribosomal_uL30_B"/>
    <property type="match status" value="1"/>
</dbReference>
<dbReference type="InterPro" id="IPR036919">
    <property type="entry name" value="Ribo_uL30_ferredoxin-like_sf"/>
</dbReference>
<dbReference type="InterPro" id="IPR005996">
    <property type="entry name" value="Ribosomal_uL30_bac-type"/>
</dbReference>
<dbReference type="InterPro" id="IPR016082">
    <property type="entry name" value="Ribosomal_uL30_ferredoxin-like"/>
</dbReference>
<dbReference type="NCBIfam" id="TIGR01308">
    <property type="entry name" value="rpmD_bact"/>
    <property type="match status" value="1"/>
</dbReference>
<dbReference type="PANTHER" id="PTHR15892:SF2">
    <property type="entry name" value="LARGE RIBOSOMAL SUBUNIT PROTEIN UL30M"/>
    <property type="match status" value="1"/>
</dbReference>
<dbReference type="PANTHER" id="PTHR15892">
    <property type="entry name" value="MITOCHONDRIAL RIBOSOMAL PROTEIN L30"/>
    <property type="match status" value="1"/>
</dbReference>
<dbReference type="Pfam" id="PF00327">
    <property type="entry name" value="Ribosomal_L30"/>
    <property type="match status" value="1"/>
</dbReference>
<dbReference type="PIRSF" id="PIRSF002211">
    <property type="entry name" value="Ribosomal_L30_bac-type"/>
    <property type="match status" value="1"/>
</dbReference>
<dbReference type="SUPFAM" id="SSF55129">
    <property type="entry name" value="Ribosomal protein L30p/L7e"/>
    <property type="match status" value="1"/>
</dbReference>
<sequence length="69" mass="7844">MAKATKKAEAKTVTIEQIGSPIRRPDVQQRTLIGLGLNKMHRRRTLEDTPSVRGMIRAVQHLVRIVDEK</sequence>
<organism>
    <name type="scientific">Rhizobium etli (strain ATCC 51251 / DSM 11541 / JCM 21823 / NBRC 15573 / CFN 42)</name>
    <dbReference type="NCBI Taxonomy" id="347834"/>
    <lineage>
        <taxon>Bacteria</taxon>
        <taxon>Pseudomonadati</taxon>
        <taxon>Pseudomonadota</taxon>
        <taxon>Alphaproteobacteria</taxon>
        <taxon>Hyphomicrobiales</taxon>
        <taxon>Rhizobiaceae</taxon>
        <taxon>Rhizobium/Agrobacterium group</taxon>
        <taxon>Rhizobium</taxon>
    </lineage>
</organism>
<protein>
    <recommendedName>
        <fullName evidence="1">Large ribosomal subunit protein uL30</fullName>
    </recommendedName>
    <alternativeName>
        <fullName evidence="2">50S ribosomal protein L30</fullName>
    </alternativeName>
</protein>
<gene>
    <name evidence="1" type="primary">rpmD</name>
    <name type="ordered locus">RHE_CH01693</name>
</gene>
<proteinExistence type="inferred from homology"/>
<keyword id="KW-1185">Reference proteome</keyword>
<keyword id="KW-0687">Ribonucleoprotein</keyword>
<keyword id="KW-0689">Ribosomal protein</keyword>
<comment type="subunit">
    <text evidence="1">Part of the 50S ribosomal subunit.</text>
</comment>
<comment type="similarity">
    <text evidence="1">Belongs to the universal ribosomal protein uL30 family.</text>
</comment>
<evidence type="ECO:0000255" key="1">
    <source>
        <dbReference type="HAMAP-Rule" id="MF_01371"/>
    </source>
</evidence>
<evidence type="ECO:0000305" key="2"/>